<feature type="chain" id="PRO_1000092770" description="Translation initiation factor IF-3">
    <location>
        <begin position="1"/>
        <end position="183"/>
    </location>
</feature>
<gene>
    <name evidence="1" type="primary">infC</name>
    <name type="ordered locus">CFPG_103</name>
</gene>
<protein>
    <recommendedName>
        <fullName evidence="1">Translation initiation factor IF-3</fullName>
    </recommendedName>
</protein>
<keyword id="KW-0963">Cytoplasm</keyword>
<keyword id="KW-0396">Initiation factor</keyword>
<keyword id="KW-0648">Protein biosynthesis</keyword>
<keyword id="KW-1185">Reference proteome</keyword>
<proteinExistence type="inferred from homology"/>
<evidence type="ECO:0000255" key="1">
    <source>
        <dbReference type="HAMAP-Rule" id="MF_00080"/>
    </source>
</evidence>
<reference key="1">
    <citation type="journal article" date="2008" name="Science">
        <title>Genome of an endosymbiont coupling N2 fixation to cellulolysis within RT protist cells in termite gut.</title>
        <authorList>
            <person name="Hongoh Y."/>
            <person name="Sharma V.K."/>
            <person name="Prakash T."/>
            <person name="Noda S."/>
            <person name="Toh H."/>
            <person name="Taylor T.D."/>
            <person name="Kudo T."/>
            <person name="Sakaki Y."/>
            <person name="Toyoda A."/>
            <person name="Hattori M."/>
            <person name="Ohkuma M."/>
        </authorList>
    </citation>
    <scope>NUCLEOTIDE SEQUENCE [LARGE SCALE GENOMIC DNA]</scope>
</reference>
<sequence>MRKDKLKDQYRINEEIRSEEVRVVGNNVEQRIYPISEALRMAGELELDLIEISPTAVPPVCKIFDYQKFIFQQKKHQKEQKVKLSKIVVKEIRFGPQTDEHDYSFKLKHAKSFLEEGNKVKAYVFFRGRSILFKEQGEILLLRFANDLEDYGKVEQLPILEGKKMIITLAPKKVEIISRRLKR</sequence>
<comment type="function">
    <text evidence="1">IF-3 binds to the 30S ribosomal subunit and shifts the equilibrium between 70S ribosomes and their 50S and 30S subunits in favor of the free subunits, thus enhancing the availability of 30S subunits on which protein synthesis initiation begins.</text>
</comment>
<comment type="subunit">
    <text evidence="1">Monomer.</text>
</comment>
<comment type="subcellular location">
    <subcellularLocation>
        <location evidence="1">Cytoplasm</location>
    </subcellularLocation>
</comment>
<comment type="similarity">
    <text evidence="1">Belongs to the IF-3 family.</text>
</comment>
<name>IF3_AZOPC</name>
<accession>B6YQ94</accession>
<dbReference type="EMBL" id="AP010656">
    <property type="protein sequence ID" value="BAG83366.1"/>
    <property type="molecule type" value="Genomic_DNA"/>
</dbReference>
<dbReference type="RefSeq" id="WP_012573127.1">
    <property type="nucleotide sequence ID" value="NC_011565.1"/>
</dbReference>
<dbReference type="SMR" id="B6YQ94"/>
<dbReference type="STRING" id="511995.CFPG_103"/>
<dbReference type="KEGG" id="aps:CFPG_103"/>
<dbReference type="eggNOG" id="COG0290">
    <property type="taxonomic scope" value="Bacteria"/>
</dbReference>
<dbReference type="HOGENOM" id="CLU_054919_3_2_10"/>
<dbReference type="OrthoDB" id="9806014at2"/>
<dbReference type="Proteomes" id="UP000000723">
    <property type="component" value="Chromosome"/>
</dbReference>
<dbReference type="GO" id="GO:0005829">
    <property type="term" value="C:cytosol"/>
    <property type="evidence" value="ECO:0007669"/>
    <property type="project" value="TreeGrafter"/>
</dbReference>
<dbReference type="GO" id="GO:0016020">
    <property type="term" value="C:membrane"/>
    <property type="evidence" value="ECO:0007669"/>
    <property type="project" value="TreeGrafter"/>
</dbReference>
<dbReference type="GO" id="GO:0043022">
    <property type="term" value="F:ribosome binding"/>
    <property type="evidence" value="ECO:0007669"/>
    <property type="project" value="TreeGrafter"/>
</dbReference>
<dbReference type="GO" id="GO:0003743">
    <property type="term" value="F:translation initiation factor activity"/>
    <property type="evidence" value="ECO:0007669"/>
    <property type="project" value="UniProtKB-UniRule"/>
</dbReference>
<dbReference type="GO" id="GO:0032790">
    <property type="term" value="P:ribosome disassembly"/>
    <property type="evidence" value="ECO:0007669"/>
    <property type="project" value="TreeGrafter"/>
</dbReference>
<dbReference type="FunFam" id="3.30.110.10:FF:000001">
    <property type="entry name" value="Translation initiation factor IF-3"/>
    <property type="match status" value="1"/>
</dbReference>
<dbReference type="Gene3D" id="3.30.110.10">
    <property type="entry name" value="Translation initiation factor 3 (IF-3), C-terminal domain"/>
    <property type="match status" value="1"/>
</dbReference>
<dbReference type="Gene3D" id="3.10.20.80">
    <property type="entry name" value="Translation initiation factor 3 (IF-3), N-terminal domain"/>
    <property type="match status" value="1"/>
</dbReference>
<dbReference type="HAMAP" id="MF_00080">
    <property type="entry name" value="IF_3"/>
    <property type="match status" value="1"/>
</dbReference>
<dbReference type="InterPro" id="IPR036788">
    <property type="entry name" value="T_IF-3_C_sf"/>
</dbReference>
<dbReference type="InterPro" id="IPR036787">
    <property type="entry name" value="T_IF-3_N_sf"/>
</dbReference>
<dbReference type="InterPro" id="IPR001288">
    <property type="entry name" value="Translation_initiation_fac_3"/>
</dbReference>
<dbReference type="InterPro" id="IPR019815">
    <property type="entry name" value="Translation_initiation_fac_3_C"/>
</dbReference>
<dbReference type="InterPro" id="IPR019814">
    <property type="entry name" value="Translation_initiation_fac_3_N"/>
</dbReference>
<dbReference type="NCBIfam" id="TIGR00168">
    <property type="entry name" value="infC"/>
    <property type="match status" value="1"/>
</dbReference>
<dbReference type="PANTHER" id="PTHR10938">
    <property type="entry name" value="TRANSLATION INITIATION FACTOR IF-3"/>
    <property type="match status" value="1"/>
</dbReference>
<dbReference type="PANTHER" id="PTHR10938:SF0">
    <property type="entry name" value="TRANSLATION INITIATION FACTOR IF-3, MITOCHONDRIAL"/>
    <property type="match status" value="1"/>
</dbReference>
<dbReference type="Pfam" id="PF00707">
    <property type="entry name" value="IF3_C"/>
    <property type="match status" value="1"/>
</dbReference>
<dbReference type="Pfam" id="PF05198">
    <property type="entry name" value="IF3_N"/>
    <property type="match status" value="1"/>
</dbReference>
<dbReference type="SUPFAM" id="SSF55200">
    <property type="entry name" value="Translation initiation factor IF3, C-terminal domain"/>
    <property type="match status" value="1"/>
</dbReference>
<dbReference type="SUPFAM" id="SSF54364">
    <property type="entry name" value="Translation initiation factor IF3, N-terminal domain"/>
    <property type="match status" value="1"/>
</dbReference>
<organism>
    <name type="scientific">Azobacteroides pseudotrichonymphae genomovar. CFP2</name>
    <dbReference type="NCBI Taxonomy" id="511995"/>
    <lineage>
        <taxon>Bacteria</taxon>
        <taxon>Pseudomonadati</taxon>
        <taxon>Bacteroidota</taxon>
        <taxon>Bacteroidia</taxon>
        <taxon>Bacteroidales</taxon>
        <taxon>Candidatus Azobacteroides</taxon>
    </lineage>
</organism>